<accession>Q90683</accession>
<proteinExistence type="evidence at transcript level"/>
<dbReference type="EMBL" id="U35054">
    <property type="protein sequence ID" value="AAA78932.1"/>
    <property type="molecule type" value="mRNA"/>
</dbReference>
<dbReference type="SMR" id="Q90683"/>
<dbReference type="FunCoup" id="Q90683">
    <property type="interactions" value="95"/>
</dbReference>
<dbReference type="PaxDb" id="9031-ENSGALP00000006977"/>
<dbReference type="VEuPathDB" id="HostDB:geneid_396334"/>
<dbReference type="eggNOG" id="KOG3910">
    <property type="taxonomic scope" value="Eukaryota"/>
</dbReference>
<dbReference type="InParanoid" id="Q90683"/>
<dbReference type="OrthoDB" id="10034090at2759"/>
<dbReference type="PhylomeDB" id="Q90683"/>
<dbReference type="Proteomes" id="UP000000539">
    <property type="component" value="Unassembled WGS sequence"/>
</dbReference>
<dbReference type="GO" id="GO:0005634">
    <property type="term" value="C:nucleus"/>
    <property type="evidence" value="ECO:0007669"/>
    <property type="project" value="UniProtKB-SubCell"/>
</dbReference>
<dbReference type="GO" id="GO:0070888">
    <property type="term" value="F:E-box binding"/>
    <property type="evidence" value="ECO:0000250"/>
    <property type="project" value="UniProtKB"/>
</dbReference>
<dbReference type="GO" id="GO:0046982">
    <property type="term" value="F:protein heterodimerization activity"/>
    <property type="evidence" value="ECO:0000250"/>
    <property type="project" value="UniProtKB"/>
</dbReference>
<dbReference type="GO" id="GO:0045666">
    <property type="term" value="P:positive regulation of neuron differentiation"/>
    <property type="evidence" value="ECO:0000250"/>
    <property type="project" value="UniProtKB"/>
</dbReference>
<dbReference type="FunFam" id="4.10.280.10:FF:000001">
    <property type="entry name" value="Putative transcription factor 12"/>
    <property type="match status" value="1"/>
</dbReference>
<dbReference type="Gene3D" id="4.10.280.10">
    <property type="entry name" value="Helix-loop-helix DNA-binding domain"/>
    <property type="match status" value="1"/>
</dbReference>
<dbReference type="InterPro" id="IPR011598">
    <property type="entry name" value="bHLH_dom"/>
</dbReference>
<dbReference type="InterPro" id="IPR036638">
    <property type="entry name" value="HLH_DNA-bd_sf"/>
</dbReference>
<dbReference type="InterPro" id="IPR051098">
    <property type="entry name" value="NeuroDiff_E-box_TFs"/>
</dbReference>
<dbReference type="PANTHER" id="PTHR11793">
    <property type="entry name" value="BASIC HELIX-LOOP-HELIX TRANSCRIPTION FACTOR"/>
    <property type="match status" value="1"/>
</dbReference>
<dbReference type="PANTHER" id="PTHR11793:SF10">
    <property type="entry name" value="TRANSCRIPTION FACTOR 4"/>
    <property type="match status" value="1"/>
</dbReference>
<dbReference type="Pfam" id="PF00010">
    <property type="entry name" value="HLH"/>
    <property type="match status" value="1"/>
</dbReference>
<dbReference type="SMART" id="SM00353">
    <property type="entry name" value="HLH"/>
    <property type="match status" value="1"/>
</dbReference>
<dbReference type="SUPFAM" id="SSF47459">
    <property type="entry name" value="HLH, helix-loop-helix DNA-binding domain"/>
    <property type="match status" value="1"/>
</dbReference>
<dbReference type="PROSITE" id="PS50888">
    <property type="entry name" value="BHLH"/>
    <property type="match status" value="1"/>
</dbReference>
<organism>
    <name type="scientific">Gallus gallus</name>
    <name type="common">Chicken</name>
    <dbReference type="NCBI Taxonomy" id="9031"/>
    <lineage>
        <taxon>Eukaryota</taxon>
        <taxon>Metazoa</taxon>
        <taxon>Chordata</taxon>
        <taxon>Craniata</taxon>
        <taxon>Vertebrata</taxon>
        <taxon>Euteleostomi</taxon>
        <taxon>Archelosauria</taxon>
        <taxon>Archosauria</taxon>
        <taxon>Dinosauria</taxon>
        <taxon>Saurischia</taxon>
        <taxon>Theropoda</taxon>
        <taxon>Coelurosauria</taxon>
        <taxon>Aves</taxon>
        <taxon>Neognathae</taxon>
        <taxon>Galloanserae</taxon>
        <taxon>Galliformes</taxon>
        <taxon>Phasianidae</taxon>
        <taxon>Phasianinae</taxon>
        <taxon>Gallus</taxon>
    </lineage>
</organism>
<protein>
    <recommendedName>
        <fullName>Transcription factor 4</fullName>
        <shortName>TCF-4</shortName>
    </recommendedName>
    <alternativeName>
        <fullName>Class A helix-loop-helix transcription factor GE2</fullName>
    </alternativeName>
</protein>
<evidence type="ECO:0000250" key="1"/>
<evidence type="ECO:0000255" key="2">
    <source>
        <dbReference type="PROSITE-ProRule" id="PRU00981"/>
    </source>
</evidence>
<evidence type="ECO:0000305" key="3"/>
<keyword id="KW-0010">Activator</keyword>
<keyword id="KW-0238">DNA-binding</keyword>
<keyword id="KW-0539">Nucleus</keyword>
<keyword id="KW-1185">Reference proteome</keyword>
<keyword id="KW-0804">Transcription</keyword>
<keyword id="KW-0805">Transcription regulation</keyword>
<name>ITF2_CHICK</name>
<feature type="chain" id="PRO_0000127259" description="Transcription factor 4">
    <location>
        <begin position="1" status="less than"/>
        <end position="85" status="greater than"/>
    </location>
</feature>
<feature type="domain" description="bHLH" evidence="2">
    <location>
        <begin position="7"/>
        <end position="60"/>
    </location>
</feature>
<feature type="region of interest" description="Class A specific domain">
    <location>
        <begin position="62"/>
        <end position="85"/>
    </location>
</feature>
<feature type="non-terminal residue">
    <location>
        <position position="1"/>
    </location>
</feature>
<feature type="non-terminal residue">
    <location>
        <position position="85"/>
    </location>
</feature>
<comment type="function">
    <text evidence="1">Transcription factor that binds to the immunoglobulin enhancer Mu-E5/KE5-motif. Involved in the initiation of neuronal differentiation. Binds to the E-box present in the somatostatin receptor 2 initiator element (SSTR2-INR) to activate transcription (By similarity).</text>
</comment>
<comment type="subunit">
    <text>Efficient DNA binding requires dimerization with another bHLH protein. Forms homo- or heterooligomers with myogenin.</text>
</comment>
<comment type="subcellular location">
    <subcellularLocation>
        <location evidence="3">Nucleus</location>
    </subcellularLocation>
</comment>
<sequence length="85" mass="10056">KAEREKERRMANNARERLRVRDINEAFKELGRMVQLHLKSDKPQTKLLILHQAVAVILSLEQQVRERNLNPKAACLKRREEEKVS</sequence>
<gene>
    <name type="primary">TCF4</name>
</gene>
<reference key="1">
    <citation type="journal article" date="1993" name="Eur. J. Neurosci.">
        <title>ME1 and GE1: basic helix-loop-helix transcription factors expressed at high levels in the developing nervous system and in morphogenetically active regions.</title>
        <authorList>
            <person name="Neuman T."/>
            <person name="Keen A."/>
            <person name="Knapik E."/>
            <person name="Shain D."/>
            <person name="Ross M."/>
            <person name="Nornes H.O."/>
            <person name="Zuber M.X."/>
        </authorList>
    </citation>
    <scope>NUCLEOTIDE SEQUENCE [MRNA]</scope>
    <source>
        <tissue>Neural tube</tissue>
    </source>
</reference>